<name>TAF1B_ORYSJ</name>
<comment type="function">
    <text evidence="1">Component of RNA polymerase I core factor complex that acts as a GTF2B/TFIIB-like factor and plays a key role in multiple steps during transcription initiation such as pre-initiation complex (PIC) assembly and postpolymerase recruitment events in polymerase I (Pol I) transcription. Binds rDNA promoters and plays a role in Pol I recruitment (By similarity).</text>
</comment>
<comment type="subcellular location">
    <subcellularLocation>
        <location evidence="1">Nucleus</location>
        <location evidence="1">Nucleolus</location>
    </subcellularLocation>
</comment>
<comment type="domain">
    <text evidence="1">Although it shares weak sequence similarity with GTF2B/TFIIB, displays a similar subdomain organization as GTF2B/TFIIB, with a N-terminal zinc finger, a connecting region (composed of B-reader and B-linker regions), followed by 2 cyclin folds.</text>
</comment>
<comment type="similarity">
    <text evidence="3">Belongs to the RRN7/TAF1B family.</text>
</comment>
<comment type="sequence caution" evidence="3">
    <conflict type="erroneous gene model prediction">
        <sequence resource="EMBL-CDS" id="AAV43874"/>
    </conflict>
</comment>
<comment type="sequence caution" evidence="3">
    <conflict type="erroneous gene model prediction">
        <sequence resource="EMBL-CDS" id="EEE63371"/>
    </conflict>
</comment>
<proteinExistence type="inferred from homology"/>
<dbReference type="EMBL" id="AC104711">
    <property type="protein sequence ID" value="AAV43874.1"/>
    <property type="status" value="ALT_SEQ"/>
    <property type="molecule type" value="Genomic_DNA"/>
</dbReference>
<dbReference type="EMBL" id="AP014961">
    <property type="status" value="NOT_ANNOTATED_CDS"/>
    <property type="molecule type" value="Genomic_DNA"/>
</dbReference>
<dbReference type="EMBL" id="CM000142">
    <property type="protein sequence ID" value="EEE63371.1"/>
    <property type="status" value="ALT_SEQ"/>
    <property type="molecule type" value="Genomic_DNA"/>
</dbReference>
<dbReference type="FunCoup" id="Q5W770">
    <property type="interactions" value="618"/>
</dbReference>
<dbReference type="STRING" id="39947.Q5W770"/>
<dbReference type="PaxDb" id="39947-Q5W770"/>
<dbReference type="eggNOG" id="KOG1988">
    <property type="taxonomic scope" value="Eukaryota"/>
</dbReference>
<dbReference type="InParanoid" id="Q5W770"/>
<dbReference type="Proteomes" id="UP000000763">
    <property type="component" value="Chromosome 5"/>
</dbReference>
<dbReference type="Proteomes" id="UP000007752">
    <property type="component" value="Chromosome 5"/>
</dbReference>
<dbReference type="Proteomes" id="UP000059680">
    <property type="component" value="Chromosome 5"/>
</dbReference>
<dbReference type="GO" id="GO:0070860">
    <property type="term" value="C:RNA polymerase I core factor complex"/>
    <property type="evidence" value="ECO:0000318"/>
    <property type="project" value="GO_Central"/>
</dbReference>
<dbReference type="GO" id="GO:0001164">
    <property type="term" value="F:RNA polymerase I core promoter sequence-specific DNA binding"/>
    <property type="evidence" value="ECO:0000250"/>
    <property type="project" value="UniProtKB"/>
</dbReference>
<dbReference type="GO" id="GO:0008270">
    <property type="term" value="F:zinc ion binding"/>
    <property type="evidence" value="ECO:0007669"/>
    <property type="project" value="UniProtKB-KW"/>
</dbReference>
<dbReference type="GO" id="GO:0042790">
    <property type="term" value="P:nucleolar large rRNA transcription by RNA polymerase I"/>
    <property type="evidence" value="ECO:0000318"/>
    <property type="project" value="GO_Central"/>
</dbReference>
<dbReference type="GO" id="GO:0001188">
    <property type="term" value="P:RNA polymerase I preinitiation complex assembly"/>
    <property type="evidence" value="ECO:0000250"/>
    <property type="project" value="UniProtKB"/>
</dbReference>
<dbReference type="InterPro" id="IPR048538">
    <property type="entry name" value="Rrn7_cyclin_C"/>
</dbReference>
<dbReference type="InterPro" id="IPR048540">
    <property type="entry name" value="Rrn7_cyclin_N"/>
</dbReference>
<dbReference type="InterPro" id="IPR033599">
    <property type="entry name" value="TAF1B/Rrn7"/>
</dbReference>
<dbReference type="PANTHER" id="PTHR31576">
    <property type="entry name" value="TATA BOX-BINDING PROTEIN-ASSOCIATED FACTOR RNA POLYMERASE I SUBUNIT B"/>
    <property type="match status" value="1"/>
</dbReference>
<dbReference type="PANTHER" id="PTHR31576:SF2">
    <property type="entry name" value="TATA BOX-BINDING PROTEIN-ASSOCIATED FACTOR RNA POLYMERASE I SUBUNIT B"/>
    <property type="match status" value="1"/>
</dbReference>
<dbReference type="Pfam" id="PF20645">
    <property type="entry name" value="Rrn7_cyclin_C"/>
    <property type="match status" value="1"/>
</dbReference>
<dbReference type="Pfam" id="PF20644">
    <property type="entry name" value="Rrn7_cyclin_N"/>
    <property type="match status" value="1"/>
</dbReference>
<accession>Q5W770</accession>
<accession>B9FP26</accession>
<gene>
    <name type="ordered locus">Os05g0352700</name>
    <name type="ORF">OJ1320_D10.4</name>
    <name type="ORF">OsJ_18183</name>
</gene>
<organism>
    <name type="scientific">Oryza sativa subsp. japonica</name>
    <name type="common">Rice</name>
    <dbReference type="NCBI Taxonomy" id="39947"/>
    <lineage>
        <taxon>Eukaryota</taxon>
        <taxon>Viridiplantae</taxon>
        <taxon>Streptophyta</taxon>
        <taxon>Embryophyta</taxon>
        <taxon>Tracheophyta</taxon>
        <taxon>Spermatophyta</taxon>
        <taxon>Magnoliopsida</taxon>
        <taxon>Liliopsida</taxon>
        <taxon>Poales</taxon>
        <taxon>Poaceae</taxon>
        <taxon>BOP clade</taxon>
        <taxon>Oryzoideae</taxon>
        <taxon>Oryzeae</taxon>
        <taxon>Oryzinae</taxon>
        <taxon>Oryza</taxon>
        <taxon>Oryza sativa</taxon>
    </lineage>
</organism>
<feature type="chain" id="PRO_0000416879" description="TATA box-binding protein-associated factor RNA polymerase I subunit B">
    <location>
        <begin position="1"/>
        <end position="634"/>
    </location>
</feature>
<feature type="zinc finger region" description="RRN7-type">
    <location>
        <begin position="19"/>
        <end position="51"/>
    </location>
</feature>
<feature type="region of interest" description="B-reader" evidence="1">
    <location>
        <begin position="51"/>
        <end position="80"/>
    </location>
</feature>
<feature type="region of interest" description="Disordered" evidence="2">
    <location>
        <begin position="54"/>
        <end position="107"/>
    </location>
</feature>
<feature type="region of interest" description="B-linker" evidence="1">
    <location>
        <begin position="81"/>
        <end position="83"/>
    </location>
</feature>
<feature type="region of interest" description="N-terminal cyclin fold" evidence="1">
    <location>
        <begin position="84"/>
        <end position="281"/>
    </location>
</feature>
<feature type="region of interest" description="C-terminal cyclin fold" evidence="1">
    <location>
        <begin position="282"/>
        <end position="284"/>
    </location>
</feature>
<feature type="compositionally biased region" description="Pro residues" evidence="2">
    <location>
        <begin position="77"/>
        <end position="87"/>
    </location>
</feature>
<feature type="compositionally biased region" description="Low complexity" evidence="2">
    <location>
        <begin position="88"/>
        <end position="98"/>
    </location>
</feature>
<feature type="binding site" evidence="1">
    <location>
        <position position="21"/>
    </location>
    <ligand>
        <name>Zn(2+)</name>
        <dbReference type="ChEBI" id="CHEBI:29105"/>
    </ligand>
</feature>
<feature type="binding site" evidence="1">
    <location>
        <position position="24"/>
    </location>
    <ligand>
        <name>Zn(2+)</name>
        <dbReference type="ChEBI" id="CHEBI:29105"/>
    </ligand>
</feature>
<feature type="binding site" evidence="1">
    <location>
        <position position="42"/>
    </location>
    <ligand>
        <name>Zn(2+)</name>
        <dbReference type="ChEBI" id="CHEBI:29105"/>
    </ligand>
</feature>
<feature type="binding site" evidence="1">
    <location>
        <position position="45"/>
    </location>
    <ligand>
        <name>Zn(2+)</name>
        <dbReference type="ChEBI" id="CHEBI:29105"/>
    </ligand>
</feature>
<evidence type="ECO:0000250" key="1"/>
<evidence type="ECO:0000256" key="2">
    <source>
        <dbReference type="SAM" id="MobiDB-lite"/>
    </source>
</evidence>
<evidence type="ECO:0000305" key="3"/>
<protein>
    <recommendedName>
        <fullName>TATA box-binding protein-associated factor RNA polymerase I subunit B</fullName>
    </recommendedName>
    <alternativeName>
        <fullName>TATA box-binding protein-associated factor 1B</fullName>
        <shortName>TBP-associated factor 1B</shortName>
    </alternativeName>
</protein>
<keyword id="KW-0238">DNA-binding</keyword>
<keyword id="KW-0479">Metal-binding</keyword>
<keyword id="KW-0539">Nucleus</keyword>
<keyword id="KW-1185">Reference proteome</keyword>
<keyword id="KW-0804">Transcription</keyword>
<keyword id="KW-0805">Transcription regulation</keyword>
<keyword id="KW-0862">Zinc</keyword>
<keyword id="KW-0863">Zinc-finger</keyword>
<reference key="1">
    <citation type="journal article" date="2005" name="Mol. Genet. Genomics">
        <title>A fine physical map of the rice chromosome 5.</title>
        <authorList>
            <person name="Cheng C.-H."/>
            <person name="Chung M.C."/>
            <person name="Liu S.-M."/>
            <person name="Chen S.-K."/>
            <person name="Kao F.Y."/>
            <person name="Lin S.-J."/>
            <person name="Hsiao S.-H."/>
            <person name="Tseng I.C."/>
            <person name="Hsing Y.-I.C."/>
            <person name="Wu H.-P."/>
            <person name="Chen C.-S."/>
            <person name="Shaw J.-F."/>
            <person name="Wu J."/>
            <person name="Matsumoto T."/>
            <person name="Sasaki T."/>
            <person name="Chen H.-C."/>
            <person name="Chow T.-Y."/>
        </authorList>
    </citation>
    <scope>NUCLEOTIDE SEQUENCE [LARGE SCALE GENOMIC DNA]</scope>
    <source>
        <strain>cv. Nipponbare</strain>
    </source>
</reference>
<reference key="2">
    <citation type="journal article" date="2005" name="Nature">
        <title>The map-based sequence of the rice genome.</title>
        <authorList>
            <consortium name="International rice genome sequencing project (IRGSP)"/>
        </authorList>
    </citation>
    <scope>NUCLEOTIDE SEQUENCE [LARGE SCALE GENOMIC DNA]</scope>
    <source>
        <strain>cv. Nipponbare</strain>
    </source>
</reference>
<reference key="3">
    <citation type="journal article" date="2013" name="Rice">
        <title>Improvement of the Oryza sativa Nipponbare reference genome using next generation sequence and optical map data.</title>
        <authorList>
            <person name="Kawahara Y."/>
            <person name="de la Bastide M."/>
            <person name="Hamilton J.P."/>
            <person name="Kanamori H."/>
            <person name="McCombie W.R."/>
            <person name="Ouyang S."/>
            <person name="Schwartz D.C."/>
            <person name="Tanaka T."/>
            <person name="Wu J."/>
            <person name="Zhou S."/>
            <person name="Childs K.L."/>
            <person name="Davidson R.M."/>
            <person name="Lin H."/>
            <person name="Quesada-Ocampo L."/>
            <person name="Vaillancourt B."/>
            <person name="Sakai H."/>
            <person name="Lee S.S."/>
            <person name="Kim J."/>
            <person name="Numa H."/>
            <person name="Itoh T."/>
            <person name="Buell C.R."/>
            <person name="Matsumoto T."/>
        </authorList>
    </citation>
    <scope>GENOME REANNOTATION</scope>
    <source>
        <strain>cv. Nipponbare</strain>
    </source>
</reference>
<reference key="4">
    <citation type="journal article" date="2005" name="PLoS Biol.">
        <title>The genomes of Oryza sativa: a history of duplications.</title>
        <authorList>
            <person name="Yu J."/>
            <person name="Wang J."/>
            <person name="Lin W."/>
            <person name="Li S."/>
            <person name="Li H."/>
            <person name="Zhou J."/>
            <person name="Ni P."/>
            <person name="Dong W."/>
            <person name="Hu S."/>
            <person name="Zeng C."/>
            <person name="Zhang J."/>
            <person name="Zhang Y."/>
            <person name="Li R."/>
            <person name="Xu Z."/>
            <person name="Li S."/>
            <person name="Li X."/>
            <person name="Zheng H."/>
            <person name="Cong L."/>
            <person name="Lin L."/>
            <person name="Yin J."/>
            <person name="Geng J."/>
            <person name="Li G."/>
            <person name="Shi J."/>
            <person name="Liu J."/>
            <person name="Lv H."/>
            <person name="Li J."/>
            <person name="Wang J."/>
            <person name="Deng Y."/>
            <person name="Ran L."/>
            <person name="Shi X."/>
            <person name="Wang X."/>
            <person name="Wu Q."/>
            <person name="Li C."/>
            <person name="Ren X."/>
            <person name="Wang J."/>
            <person name="Wang X."/>
            <person name="Li D."/>
            <person name="Liu D."/>
            <person name="Zhang X."/>
            <person name="Ji Z."/>
            <person name="Zhao W."/>
            <person name="Sun Y."/>
            <person name="Zhang Z."/>
            <person name="Bao J."/>
            <person name="Han Y."/>
            <person name="Dong L."/>
            <person name="Ji J."/>
            <person name="Chen P."/>
            <person name="Wu S."/>
            <person name="Liu J."/>
            <person name="Xiao Y."/>
            <person name="Bu D."/>
            <person name="Tan J."/>
            <person name="Yang L."/>
            <person name="Ye C."/>
            <person name="Zhang J."/>
            <person name="Xu J."/>
            <person name="Zhou Y."/>
            <person name="Yu Y."/>
            <person name="Zhang B."/>
            <person name="Zhuang S."/>
            <person name="Wei H."/>
            <person name="Liu B."/>
            <person name="Lei M."/>
            <person name="Yu H."/>
            <person name="Li Y."/>
            <person name="Xu H."/>
            <person name="Wei S."/>
            <person name="He X."/>
            <person name="Fang L."/>
            <person name="Zhang Z."/>
            <person name="Zhang Y."/>
            <person name="Huang X."/>
            <person name="Su Z."/>
            <person name="Tong W."/>
            <person name="Li J."/>
            <person name="Tong Z."/>
            <person name="Li S."/>
            <person name="Ye J."/>
            <person name="Wang L."/>
            <person name="Fang L."/>
            <person name="Lei T."/>
            <person name="Chen C.-S."/>
            <person name="Chen H.-C."/>
            <person name="Xu Z."/>
            <person name="Li H."/>
            <person name="Huang H."/>
            <person name="Zhang F."/>
            <person name="Xu H."/>
            <person name="Li N."/>
            <person name="Zhao C."/>
            <person name="Li S."/>
            <person name="Dong L."/>
            <person name="Huang Y."/>
            <person name="Li L."/>
            <person name="Xi Y."/>
            <person name="Qi Q."/>
            <person name="Li W."/>
            <person name="Zhang B."/>
            <person name="Hu W."/>
            <person name="Zhang Y."/>
            <person name="Tian X."/>
            <person name="Jiao Y."/>
            <person name="Liang X."/>
            <person name="Jin J."/>
            <person name="Gao L."/>
            <person name="Zheng W."/>
            <person name="Hao B."/>
            <person name="Liu S.-M."/>
            <person name="Wang W."/>
            <person name="Yuan L."/>
            <person name="Cao M."/>
            <person name="McDermott J."/>
            <person name="Samudrala R."/>
            <person name="Wang J."/>
            <person name="Wong G.K.-S."/>
            <person name="Yang H."/>
        </authorList>
    </citation>
    <scope>NUCLEOTIDE SEQUENCE [LARGE SCALE GENOMIC DNA]</scope>
    <source>
        <strain>cv. Nipponbare</strain>
    </source>
</reference>
<sequence>MDDDGGGSPGHYGGGGIHLVCEYCGHGSEYAEDDADDGFFTCRQCSAIHTSTQNTATNPFDFPMTPAHLSAHRRPTQPTPTPKPFPAPRGAATGAAAPDFDDLGEPSEPRDFATGANAWGNPEDVAARVRWRYVRGLQVILQRQLEALVERHRVGSLAASLAGTIWLRWVAASKVFDEMWVHKMLAIAASVEEGHSASKDKQSELEGDAQKSQSSYEFLFLRSLRMMLPVYSTLAVCFLACHVARETILPTDICRWAMEGKLPYVAAFTQVDKLLGSSLNDCPLSSRQLFRPTRVIGAWQLEAAAGSIAQKIGLLLPSVNFYLIAQRFLKELSLPIEKILPHACRIYEWAMPAELWLSSNPGRVPSRVCVMAILIVALRVLYGINGQGIWESIAQTENAVGSDPEASAPHSIEPDSNNSEEFDARELLCTLAASYDKINVGHDYSKEVHSYLKYCKDVVFTGMTFSLEEEHLIDIFWDMYKGKEVMLLDENAKLCQEKLRTTNGVNKRCRDGRFADTKCCSTPLGNCALQSIKSKMEENGFCYVSPRKRLVSDGYLLYTRRESSGSLIYVAHADYYILLRPFAKLAEVDVRVLHSSVLKLERRLGWIEERVGRSLNTLQNLHDEASDDERPVSD</sequence>